<comment type="function">
    <text evidence="1">Cell division protein that may be involved in stabilizing or promoting the assembly of the division complex.</text>
</comment>
<comment type="subcellular location">
    <subcellularLocation>
        <location evidence="1">Cell membrane</location>
        <topology evidence="1">Single-pass type II membrane protein</topology>
    </subcellularLocation>
    <text evidence="1">Localizes to the division septum.</text>
</comment>
<comment type="similarity">
    <text evidence="1">Belongs to the FtsQ/DivIB family. DivIB subfamily.</text>
</comment>
<gene>
    <name evidence="1" type="primary">divIB</name>
    <name type="ordered locus">SGO_0673</name>
</gene>
<organism>
    <name type="scientific">Streptococcus gordonii (strain Challis / ATCC 35105 / BCRC 15272 / CH1 / DL1 / V288)</name>
    <dbReference type="NCBI Taxonomy" id="467705"/>
    <lineage>
        <taxon>Bacteria</taxon>
        <taxon>Bacillati</taxon>
        <taxon>Bacillota</taxon>
        <taxon>Bacilli</taxon>
        <taxon>Lactobacillales</taxon>
        <taxon>Streptococcaceae</taxon>
        <taxon>Streptococcus</taxon>
    </lineage>
</organism>
<accession>A8AW16</accession>
<name>DIVIB_STRGC</name>
<reference key="1">
    <citation type="journal article" date="2007" name="J. Bacteriol.">
        <title>Genome-wide transcriptional changes in Streptococcus gordonii in response to competence signaling peptide.</title>
        <authorList>
            <person name="Vickerman M.M."/>
            <person name="Iobst S."/>
            <person name="Jesionowski A.M."/>
            <person name="Gill S.R."/>
        </authorList>
    </citation>
    <scope>NUCLEOTIDE SEQUENCE [LARGE SCALE GENOMIC DNA]</scope>
    <source>
        <strain>Challis / ATCC 35105 / BCRC 15272 / CH1 / DL1 / V288</strain>
    </source>
</reference>
<protein>
    <recommendedName>
        <fullName evidence="1">Cell division protein DivIB</fullName>
    </recommendedName>
</protein>
<sequence>MTTKDKGDQKELQKYLSEWQKRHQEYLEKKSQEKASETDEEERNAEPLETSESAGTKETDNSEDEKEDQTQDQASDDDETNESEESEDVEEPEEENIEESSDVSEDRTEKFIGQADVGIEKEAKRDKPRIERIHLYRALPVLVISSLLILLSLYFITPLGSLKNLVVTGNERVTQDEIIKATQIDSRDYTLTTFLNRNQYANNLKKANSWIEKAEISYQFPITFKIQVTEYKILAYEASTGNIYPVISNGTVINQPVKKEALPENYMRLNLSDKAKVKKLVQELSDVPDSIKNEIQTVDLTPSKATKDLLTLTMRDEHKIIVPLSDIHKKLPYYSRVHPLLTEPSIVDMEAGIFSYSASLVQKEEQDQEQEKEESSEETVPGETEAAPSDVTDETNN</sequence>
<evidence type="ECO:0000255" key="1">
    <source>
        <dbReference type="HAMAP-Rule" id="MF_00912"/>
    </source>
</evidence>
<evidence type="ECO:0000255" key="2">
    <source>
        <dbReference type="PROSITE-ProRule" id="PRU01115"/>
    </source>
</evidence>
<evidence type="ECO:0000256" key="3">
    <source>
        <dbReference type="SAM" id="MobiDB-lite"/>
    </source>
</evidence>
<dbReference type="EMBL" id="CP000725">
    <property type="protein sequence ID" value="ABV09429.1"/>
    <property type="molecule type" value="Genomic_DNA"/>
</dbReference>
<dbReference type="RefSeq" id="WP_012000148.1">
    <property type="nucleotide sequence ID" value="NC_009785.1"/>
</dbReference>
<dbReference type="STRING" id="467705.SGO_0673"/>
<dbReference type="KEGG" id="sgo:SGO_0673"/>
<dbReference type="eggNOG" id="COG1589">
    <property type="taxonomic scope" value="Bacteria"/>
</dbReference>
<dbReference type="HOGENOM" id="CLU_046278_1_1_9"/>
<dbReference type="Proteomes" id="UP000001131">
    <property type="component" value="Chromosome"/>
</dbReference>
<dbReference type="GO" id="GO:0032153">
    <property type="term" value="C:cell division site"/>
    <property type="evidence" value="ECO:0007669"/>
    <property type="project" value="UniProtKB-UniRule"/>
</dbReference>
<dbReference type="GO" id="GO:0005886">
    <property type="term" value="C:plasma membrane"/>
    <property type="evidence" value="ECO:0007669"/>
    <property type="project" value="UniProtKB-SubCell"/>
</dbReference>
<dbReference type="GO" id="GO:0043093">
    <property type="term" value="P:FtsZ-dependent cytokinesis"/>
    <property type="evidence" value="ECO:0007669"/>
    <property type="project" value="UniProtKB-UniRule"/>
</dbReference>
<dbReference type="Gene3D" id="3.40.50.10960">
    <property type="match status" value="1"/>
</dbReference>
<dbReference type="Gene3D" id="3.10.20.310">
    <property type="entry name" value="membrane protein fhac"/>
    <property type="match status" value="1"/>
</dbReference>
<dbReference type="HAMAP" id="MF_00912">
    <property type="entry name" value="DivIB"/>
    <property type="match status" value="1"/>
</dbReference>
<dbReference type="InterPro" id="IPR026580">
    <property type="entry name" value="DivIB"/>
</dbReference>
<dbReference type="InterPro" id="IPR050487">
    <property type="entry name" value="FtsQ_DivIB"/>
</dbReference>
<dbReference type="InterPro" id="IPR034746">
    <property type="entry name" value="POTRA"/>
</dbReference>
<dbReference type="InterPro" id="IPR013685">
    <property type="entry name" value="POTRA_FtsQ_type"/>
</dbReference>
<dbReference type="PANTHER" id="PTHR37820">
    <property type="entry name" value="CELL DIVISION PROTEIN DIVIB"/>
    <property type="match status" value="1"/>
</dbReference>
<dbReference type="PANTHER" id="PTHR37820:SF1">
    <property type="entry name" value="CELL DIVISION PROTEIN FTSQ"/>
    <property type="match status" value="1"/>
</dbReference>
<dbReference type="Pfam" id="PF08478">
    <property type="entry name" value="POTRA_1"/>
    <property type="match status" value="1"/>
</dbReference>
<dbReference type="PROSITE" id="PS51779">
    <property type="entry name" value="POTRA"/>
    <property type="match status" value="1"/>
</dbReference>
<keyword id="KW-0131">Cell cycle</keyword>
<keyword id="KW-0132">Cell division</keyword>
<keyword id="KW-1003">Cell membrane</keyword>
<keyword id="KW-0472">Membrane</keyword>
<keyword id="KW-1185">Reference proteome</keyword>
<keyword id="KW-0812">Transmembrane</keyword>
<keyword id="KW-1133">Transmembrane helix</keyword>
<feature type="chain" id="PRO_0000414788" description="Cell division protein DivIB">
    <location>
        <begin position="1"/>
        <end position="397"/>
    </location>
</feature>
<feature type="topological domain" description="Cytoplasmic" evidence="1">
    <location>
        <begin position="1"/>
        <end position="138"/>
    </location>
</feature>
<feature type="transmembrane region" description="Helical" evidence="1">
    <location>
        <begin position="139"/>
        <end position="159"/>
    </location>
</feature>
<feature type="topological domain" description="Extracellular" evidence="1">
    <location>
        <begin position="160"/>
        <end position="397"/>
    </location>
</feature>
<feature type="domain" description="POTRA" evidence="2">
    <location>
        <begin position="160"/>
        <end position="231"/>
    </location>
</feature>
<feature type="region of interest" description="Disordered" evidence="3">
    <location>
        <begin position="24"/>
        <end position="115"/>
    </location>
</feature>
<feature type="region of interest" description="Disordered" evidence="3">
    <location>
        <begin position="360"/>
        <end position="397"/>
    </location>
</feature>
<feature type="compositionally biased region" description="Basic and acidic residues" evidence="3">
    <location>
        <begin position="24"/>
        <end position="37"/>
    </location>
</feature>
<feature type="compositionally biased region" description="Acidic residues" evidence="3">
    <location>
        <begin position="74"/>
        <end position="103"/>
    </location>
</feature>
<feature type="compositionally biased region" description="Acidic residues" evidence="3">
    <location>
        <begin position="366"/>
        <end position="377"/>
    </location>
</feature>
<proteinExistence type="inferred from homology"/>